<feature type="chain" id="PRO_0000209101" description="Probable potassium transporter 14">
    <location>
        <begin position="1"/>
        <end position="859"/>
    </location>
</feature>
<feature type="topological domain" description="Cytoplasmic" evidence="2">
    <location>
        <begin position="1"/>
        <end position="112"/>
    </location>
</feature>
<feature type="transmembrane region" description="Helical" evidence="2">
    <location>
        <begin position="113"/>
        <end position="133"/>
    </location>
</feature>
<feature type="topological domain" description="Extracellular" evidence="2">
    <location>
        <begin position="134"/>
        <end position="155"/>
    </location>
</feature>
<feature type="transmembrane region" description="Helical" evidence="2">
    <location>
        <begin position="156"/>
        <end position="176"/>
    </location>
</feature>
<feature type="topological domain" description="Cytoplasmic" evidence="2">
    <location>
        <begin position="177"/>
        <end position="240"/>
    </location>
</feature>
<feature type="transmembrane region" description="Helical" evidence="2">
    <location>
        <begin position="241"/>
        <end position="261"/>
    </location>
</feature>
<feature type="topological domain" description="Extracellular" evidence="2">
    <location>
        <begin position="262"/>
        <end position="275"/>
    </location>
</feature>
<feature type="transmembrane region" description="Helical" evidence="2">
    <location>
        <begin position="276"/>
        <end position="296"/>
    </location>
</feature>
<feature type="topological domain" description="Cytoplasmic" evidence="2">
    <location>
        <begin position="297"/>
        <end position="305"/>
    </location>
</feature>
<feature type="transmembrane region" description="Helical" evidence="2">
    <location>
        <begin position="306"/>
        <end position="326"/>
    </location>
</feature>
<feature type="topological domain" description="Extracellular" evidence="2">
    <location>
        <begin position="327"/>
        <end position="359"/>
    </location>
</feature>
<feature type="transmembrane region" description="Helical" evidence="2">
    <location>
        <begin position="360"/>
        <end position="380"/>
    </location>
</feature>
<feature type="topological domain" description="Cytoplasmic" evidence="2">
    <location>
        <begin position="381"/>
        <end position="388"/>
    </location>
</feature>
<feature type="transmembrane region" description="Helical" evidence="2">
    <location>
        <begin position="389"/>
        <end position="409"/>
    </location>
</feature>
<feature type="topological domain" description="Extracellular" evidence="2">
    <location>
        <begin position="410"/>
        <end position="417"/>
    </location>
</feature>
<feature type="transmembrane region" description="Helical" evidence="2">
    <location>
        <begin position="418"/>
        <end position="438"/>
    </location>
</feature>
<feature type="topological domain" description="Cytoplasmic" evidence="2">
    <location>
        <begin position="439"/>
        <end position="478"/>
    </location>
</feature>
<feature type="transmembrane region" description="Helical" evidence="2">
    <location>
        <begin position="479"/>
        <end position="499"/>
    </location>
</feature>
<feature type="topological domain" description="Extracellular" evidence="2">
    <location>
        <begin position="500"/>
        <end position="508"/>
    </location>
</feature>
<feature type="transmembrane region" description="Helical" evidence="2">
    <location>
        <begin position="509"/>
        <end position="531"/>
    </location>
</feature>
<feature type="topological domain" description="Cytoplasmic" evidence="2">
    <location>
        <begin position="532"/>
        <end position="535"/>
    </location>
</feature>
<feature type="transmembrane region" description="Helical" evidence="2">
    <location>
        <begin position="536"/>
        <end position="558"/>
    </location>
</feature>
<feature type="topological domain" description="Extracellular" evidence="2">
    <location>
        <begin position="559"/>
        <end position="560"/>
    </location>
</feature>
<feature type="transmembrane region" description="Helical" evidence="2">
    <location>
        <begin position="561"/>
        <end position="581"/>
    </location>
</feature>
<feature type="topological domain" description="Cytoplasmic" evidence="2">
    <location>
        <begin position="582"/>
        <end position="859"/>
    </location>
</feature>
<feature type="region of interest" description="Disordered" evidence="3">
    <location>
        <begin position="1"/>
        <end position="69"/>
    </location>
</feature>
<feature type="region of interest" description="Disordered" evidence="3">
    <location>
        <begin position="752"/>
        <end position="772"/>
    </location>
</feature>
<feature type="compositionally biased region" description="Gly residues" evidence="3">
    <location>
        <begin position="1"/>
        <end position="19"/>
    </location>
</feature>
<feature type="compositionally biased region" description="Low complexity" evidence="3">
    <location>
        <begin position="54"/>
        <end position="65"/>
    </location>
</feature>
<feature type="compositionally biased region" description="Polar residues" evidence="3">
    <location>
        <begin position="763"/>
        <end position="772"/>
    </location>
</feature>
<feature type="glycosylation site" description="N-linked (GlcNAc...) asparagine" evidence="2">
    <location>
        <position position="411"/>
    </location>
</feature>
<feature type="sequence conflict" description="In Ref. 5; AK106582." evidence="4" ref="5">
    <original>E</original>
    <variation>G</variation>
    <location>
        <position position="664"/>
    </location>
</feature>
<feature type="sequence conflict" description="In Ref. 5; AK106582." evidence="4" ref="5">
    <original>V</original>
    <variation>A</variation>
    <location>
        <position position="733"/>
    </location>
</feature>
<reference key="1">
    <citation type="journal article" date="2005" name="Nature">
        <title>The map-based sequence of the rice genome.</title>
        <authorList>
            <consortium name="International rice genome sequencing project (IRGSP)"/>
        </authorList>
    </citation>
    <scope>NUCLEOTIDE SEQUENCE [LARGE SCALE GENOMIC DNA]</scope>
    <source>
        <strain>cv. Nipponbare</strain>
    </source>
</reference>
<reference key="2">
    <citation type="journal article" date="2008" name="Nucleic Acids Res.">
        <title>The rice annotation project database (RAP-DB): 2008 update.</title>
        <authorList>
            <consortium name="The rice annotation project (RAP)"/>
        </authorList>
    </citation>
    <scope>GENOME REANNOTATION</scope>
    <source>
        <strain>cv. Nipponbare</strain>
    </source>
</reference>
<reference key="3">
    <citation type="journal article" date="2013" name="Rice">
        <title>Improvement of the Oryza sativa Nipponbare reference genome using next generation sequence and optical map data.</title>
        <authorList>
            <person name="Kawahara Y."/>
            <person name="de la Bastide M."/>
            <person name="Hamilton J.P."/>
            <person name="Kanamori H."/>
            <person name="McCombie W.R."/>
            <person name="Ouyang S."/>
            <person name="Schwartz D.C."/>
            <person name="Tanaka T."/>
            <person name="Wu J."/>
            <person name="Zhou S."/>
            <person name="Childs K.L."/>
            <person name="Davidson R.M."/>
            <person name="Lin H."/>
            <person name="Quesada-Ocampo L."/>
            <person name="Vaillancourt B."/>
            <person name="Sakai H."/>
            <person name="Lee S.S."/>
            <person name="Kim J."/>
            <person name="Numa H."/>
            <person name="Itoh T."/>
            <person name="Buell C.R."/>
            <person name="Matsumoto T."/>
        </authorList>
    </citation>
    <scope>GENOME REANNOTATION</scope>
    <source>
        <strain>cv. Nipponbare</strain>
    </source>
</reference>
<reference key="4">
    <citation type="journal article" date="2002" name="Plant Physiol.">
        <title>Inventory and functional characterization of the HAK potassium transporters of rice.</title>
        <authorList>
            <person name="Banuelos M.A."/>
            <person name="Garciadeblas B."/>
            <person name="Cubero B."/>
            <person name="Rodriguez-Navarro A."/>
        </authorList>
    </citation>
    <scope>NUCLEOTIDE SEQUENCE [GENOMIC DNA] OF 106-683</scope>
    <scope>NOMENCLATURE</scope>
    <source>
        <strain>cv. Nipponbare</strain>
    </source>
</reference>
<reference key="5">
    <citation type="journal article" date="2003" name="Science">
        <title>Collection, mapping, and annotation of over 28,000 cDNA clones from japonica rice.</title>
        <authorList>
            <consortium name="The rice full-length cDNA consortium"/>
        </authorList>
    </citation>
    <scope>NUCLEOTIDE SEQUENCE [LARGE SCALE MRNA] OF 420-859</scope>
    <source>
        <strain>cv. Nipponbare</strain>
    </source>
</reference>
<reference key="6">
    <citation type="journal article" date="2009" name="J. Genet. Genomics">
        <title>Molecular evolution and functional divergence of HAK potassium transporter gene family in rice (Oryza sativa L.).</title>
        <authorList>
            <person name="Yang Z."/>
            <person name="Gao Q."/>
            <person name="Sun C."/>
            <person name="Li W."/>
            <person name="Gu S."/>
            <person name="Xu C."/>
        </authorList>
    </citation>
    <scope>GENE FAMILY</scope>
</reference>
<proteinExistence type="evidence at transcript level"/>
<comment type="function">
    <text evidence="1">High-affinity potassium transporter.</text>
</comment>
<comment type="subcellular location">
    <subcellularLocation>
        <location evidence="4">Membrane</location>
        <topology evidence="4">Multi-pass membrane protein</topology>
    </subcellularLocation>
</comment>
<comment type="similarity">
    <text evidence="4">Belongs to the HAK/KUP transporter (TC 2.A.72.3) family.</text>
</comment>
<comment type="sequence caution" evidence="4">
    <conflict type="erroneous gene model prediction">
        <sequence resource="EMBL-CDS" id="BAF21661"/>
    </conflict>
</comment>
<comment type="sequence caution" evidence="4">
    <conflict type="erroneous gene model prediction">
        <sequence resource="EMBL-CDS" id="CAD21004"/>
    </conflict>
</comment>
<keyword id="KW-0325">Glycoprotein</keyword>
<keyword id="KW-0406">Ion transport</keyword>
<keyword id="KW-0472">Membrane</keyword>
<keyword id="KW-0630">Potassium</keyword>
<keyword id="KW-0633">Potassium transport</keyword>
<keyword id="KW-1185">Reference proteome</keyword>
<keyword id="KW-0812">Transmembrane</keyword>
<keyword id="KW-1133">Transmembrane helix</keyword>
<keyword id="KW-0813">Transport</keyword>
<name>HAK14_ORYSJ</name>
<evidence type="ECO:0000250" key="1"/>
<evidence type="ECO:0000255" key="2"/>
<evidence type="ECO:0000256" key="3">
    <source>
        <dbReference type="SAM" id="MobiDB-lite"/>
    </source>
</evidence>
<evidence type="ECO:0000305" key="4"/>
<dbReference type="EMBL" id="AP005185">
    <property type="protein sequence ID" value="BAD31109.1"/>
    <property type="molecule type" value="Genomic_DNA"/>
</dbReference>
<dbReference type="EMBL" id="AP008213">
    <property type="protein sequence ID" value="BAF21661.1"/>
    <property type="status" value="ALT_SEQ"/>
    <property type="molecule type" value="Genomic_DNA"/>
</dbReference>
<dbReference type="EMBL" id="AP014963">
    <property type="status" value="NOT_ANNOTATED_CDS"/>
    <property type="molecule type" value="Genomic_DNA"/>
</dbReference>
<dbReference type="EMBL" id="AJ427983">
    <property type="protein sequence ID" value="CAD21004.1"/>
    <property type="status" value="ALT_SEQ"/>
    <property type="molecule type" value="Genomic_DNA"/>
</dbReference>
<dbReference type="EMBL" id="AK106582">
    <property type="status" value="NOT_ANNOTATED_CDS"/>
    <property type="molecule type" value="mRNA"/>
</dbReference>
<dbReference type="RefSeq" id="XP_015647734.1">
    <property type="nucleotide sequence ID" value="XM_015792248.1"/>
</dbReference>
<dbReference type="FunCoup" id="Q69RI8">
    <property type="interactions" value="482"/>
</dbReference>
<dbReference type="STRING" id="39947.Q69RI8"/>
<dbReference type="GlyCosmos" id="Q69RI8">
    <property type="glycosylation" value="1 site, No reported glycans"/>
</dbReference>
<dbReference type="PaxDb" id="39947-Q69RI8"/>
<dbReference type="KEGG" id="dosa:Os07g0509200"/>
<dbReference type="eggNOG" id="ENOG502QPSA">
    <property type="taxonomic scope" value="Eukaryota"/>
</dbReference>
<dbReference type="InParanoid" id="Q69RI8"/>
<dbReference type="OrthoDB" id="504708at2759"/>
<dbReference type="Proteomes" id="UP000000763">
    <property type="component" value="Chromosome 7"/>
</dbReference>
<dbReference type="Proteomes" id="UP000059680">
    <property type="component" value="Chromosome 7"/>
</dbReference>
<dbReference type="GO" id="GO:0016020">
    <property type="term" value="C:membrane"/>
    <property type="evidence" value="ECO:0000318"/>
    <property type="project" value="GO_Central"/>
</dbReference>
<dbReference type="GO" id="GO:0015079">
    <property type="term" value="F:potassium ion transmembrane transporter activity"/>
    <property type="evidence" value="ECO:0000318"/>
    <property type="project" value="GO_Central"/>
</dbReference>
<dbReference type="GO" id="GO:0006813">
    <property type="term" value="P:potassium ion transport"/>
    <property type="evidence" value="ECO:0000318"/>
    <property type="project" value="GO_Central"/>
</dbReference>
<dbReference type="InterPro" id="IPR003855">
    <property type="entry name" value="K+_transporter"/>
</dbReference>
<dbReference type="InterPro" id="IPR053952">
    <property type="entry name" value="K_trans_C"/>
</dbReference>
<dbReference type="InterPro" id="IPR053951">
    <property type="entry name" value="K_trans_N"/>
</dbReference>
<dbReference type="NCBIfam" id="TIGR00794">
    <property type="entry name" value="kup"/>
    <property type="match status" value="1"/>
</dbReference>
<dbReference type="PANTHER" id="PTHR30540">
    <property type="entry name" value="OSMOTIC STRESS POTASSIUM TRANSPORTER"/>
    <property type="match status" value="1"/>
</dbReference>
<dbReference type="PANTHER" id="PTHR30540:SF8">
    <property type="entry name" value="POTASSIUM TRANSPORTER 7"/>
    <property type="match status" value="1"/>
</dbReference>
<dbReference type="Pfam" id="PF02705">
    <property type="entry name" value="K_trans"/>
    <property type="match status" value="1"/>
</dbReference>
<dbReference type="Pfam" id="PF22776">
    <property type="entry name" value="K_trans_C"/>
    <property type="match status" value="1"/>
</dbReference>
<sequence>METRSGGSGSASGGGGGGRMRLRKTESAEMRWVVSGGAYEEDEIESSDGGGGTPAAASGSRGGCSDSDDNYEEAEMLRQRLVRTGPRADSLDVEAQDVAGMNRHQEITVGRSIVLAVQTLGVVFGDVGTSPLYAFDVMFNKYPITSKEDVLGALSLVIYTLILIPLLKYTLIALWGNDDGEGGTFALYSLICRNARVSLLPNQLRSDTRISSFQLQVPSVELERSLKIKERLETSSMLKKLLLMLVLFGTSMVIADGVVTPAMSVMSAVNGLKVGISSVNEGEVVMITVAVLIVLFTLQRFGSSKVALAVGPALFIWFCCLAGIGIYNMKTYGSAVLQAFNPMYIYYYFERNPTQAWMSLGGCLLCATGSEAMFADLCYFSVKSVQLTFVFLVLPCLLLGYLGQAAFLMENLTENQQVFFLSIPNQAFWPVVFIAILAAIIASRTMTTAIFSTIKQATALGCFPRLKIIHTSRSFMGQIYIPMMNWFLLVSCLAFVTMFGSINEIGNAYGIAELGVMMMTTVLVTIIMLLIWQINIIVVLCFLTLSLGLELIFFSSVLGSVADGSWVLLVFAAVLYLIMYIWNYGTKLKYETEVKQKLSMDLLMELGCNLGTVRVPGIGLLYNELARGVPGIFGQFLATMPAIHSMIIFVCIKWVPVPVVPQNERFLFRRVCPKSYHMFRCIARYGYKDIRKEDYISFQQLLIESLEKFMRREAQERSLESDQYDGTDSEEEVASASSRALVGPNGSINSLGVPPAEAAGTTEHPTIGSSMSFDGSLDEAIDGRGSLDDELSFIHKAKESGVVYLLGHGDIRARKESFFVKKLVINYFYAFLRRNCRRGIAALSIPPSRMMQVAMQYMV</sequence>
<protein>
    <recommendedName>
        <fullName>Probable potassium transporter 14</fullName>
    </recommendedName>
    <alternativeName>
        <fullName>OsHAK14</fullName>
    </alternativeName>
</protein>
<gene>
    <name type="primary">HAK14</name>
    <name type="ordered locus">Os07g0509200</name>
    <name type="ordered locus">LOC_Os07g32530</name>
    <name type="ORF">P0409B11.4</name>
</gene>
<accession>Q69RI8</accession>
<accession>Q0D662</accession>
<accession>Q8VXA9</accession>
<organism>
    <name type="scientific">Oryza sativa subsp. japonica</name>
    <name type="common">Rice</name>
    <dbReference type="NCBI Taxonomy" id="39947"/>
    <lineage>
        <taxon>Eukaryota</taxon>
        <taxon>Viridiplantae</taxon>
        <taxon>Streptophyta</taxon>
        <taxon>Embryophyta</taxon>
        <taxon>Tracheophyta</taxon>
        <taxon>Spermatophyta</taxon>
        <taxon>Magnoliopsida</taxon>
        <taxon>Liliopsida</taxon>
        <taxon>Poales</taxon>
        <taxon>Poaceae</taxon>
        <taxon>BOP clade</taxon>
        <taxon>Oryzoideae</taxon>
        <taxon>Oryzeae</taxon>
        <taxon>Oryzinae</taxon>
        <taxon>Oryza</taxon>
        <taxon>Oryza sativa</taxon>
    </lineage>
</organism>